<keyword id="KW-0963">Cytoplasm</keyword>
<keyword id="KW-0690">Ribosome biogenesis</keyword>
<feature type="chain" id="PRO_1000088926" description="Ribosome-binding factor A">
    <location>
        <begin position="1"/>
        <end position="133"/>
    </location>
</feature>
<dbReference type="EMBL" id="AM933173">
    <property type="protein sequence ID" value="CAR38975.1"/>
    <property type="molecule type" value="Genomic_DNA"/>
</dbReference>
<dbReference type="RefSeq" id="WP_001040199.1">
    <property type="nucleotide sequence ID" value="NC_011274.1"/>
</dbReference>
<dbReference type="SMR" id="B5REN5"/>
<dbReference type="KEGG" id="seg:SG3176"/>
<dbReference type="HOGENOM" id="CLU_089475_5_0_6"/>
<dbReference type="Proteomes" id="UP000008321">
    <property type="component" value="Chromosome"/>
</dbReference>
<dbReference type="GO" id="GO:0005829">
    <property type="term" value="C:cytosol"/>
    <property type="evidence" value="ECO:0007669"/>
    <property type="project" value="TreeGrafter"/>
</dbReference>
<dbReference type="GO" id="GO:0043024">
    <property type="term" value="F:ribosomal small subunit binding"/>
    <property type="evidence" value="ECO:0007669"/>
    <property type="project" value="TreeGrafter"/>
</dbReference>
<dbReference type="GO" id="GO:0030490">
    <property type="term" value="P:maturation of SSU-rRNA"/>
    <property type="evidence" value="ECO:0007669"/>
    <property type="project" value="UniProtKB-UniRule"/>
</dbReference>
<dbReference type="FunFam" id="3.30.300.20:FF:000007">
    <property type="entry name" value="Ribosome-binding factor A"/>
    <property type="match status" value="1"/>
</dbReference>
<dbReference type="Gene3D" id="3.30.300.20">
    <property type="match status" value="1"/>
</dbReference>
<dbReference type="HAMAP" id="MF_00003">
    <property type="entry name" value="RbfA"/>
    <property type="match status" value="1"/>
</dbReference>
<dbReference type="InterPro" id="IPR015946">
    <property type="entry name" value="KH_dom-like_a/b"/>
</dbReference>
<dbReference type="InterPro" id="IPR000238">
    <property type="entry name" value="RbfA"/>
</dbReference>
<dbReference type="InterPro" id="IPR023799">
    <property type="entry name" value="RbfA_dom_sf"/>
</dbReference>
<dbReference type="InterPro" id="IPR020053">
    <property type="entry name" value="Ribosome-bd_factorA_CS"/>
</dbReference>
<dbReference type="NCBIfam" id="TIGR00082">
    <property type="entry name" value="rbfA"/>
    <property type="match status" value="1"/>
</dbReference>
<dbReference type="PANTHER" id="PTHR33515">
    <property type="entry name" value="RIBOSOME-BINDING FACTOR A, CHLOROPLASTIC-RELATED"/>
    <property type="match status" value="1"/>
</dbReference>
<dbReference type="PANTHER" id="PTHR33515:SF1">
    <property type="entry name" value="RIBOSOME-BINDING FACTOR A, CHLOROPLASTIC-RELATED"/>
    <property type="match status" value="1"/>
</dbReference>
<dbReference type="Pfam" id="PF02033">
    <property type="entry name" value="RBFA"/>
    <property type="match status" value="1"/>
</dbReference>
<dbReference type="SUPFAM" id="SSF89919">
    <property type="entry name" value="Ribosome-binding factor A, RbfA"/>
    <property type="match status" value="1"/>
</dbReference>
<dbReference type="PROSITE" id="PS01319">
    <property type="entry name" value="RBFA"/>
    <property type="match status" value="1"/>
</dbReference>
<name>RBFA_SALG2</name>
<evidence type="ECO:0000255" key="1">
    <source>
        <dbReference type="HAMAP-Rule" id="MF_00003"/>
    </source>
</evidence>
<organism>
    <name type="scientific">Salmonella gallinarum (strain 287/91 / NCTC 13346)</name>
    <dbReference type="NCBI Taxonomy" id="550538"/>
    <lineage>
        <taxon>Bacteria</taxon>
        <taxon>Pseudomonadati</taxon>
        <taxon>Pseudomonadota</taxon>
        <taxon>Gammaproteobacteria</taxon>
        <taxon>Enterobacterales</taxon>
        <taxon>Enterobacteriaceae</taxon>
        <taxon>Salmonella</taxon>
    </lineage>
</organism>
<sequence length="133" mass="15166">MAKEFGRPQRVAQEMQKEIAIILQREIKDPRLGMMTTVSGVEMSRDLAYAKVFVTFLNDKDEDAVKAGIKALQEASGFIRSLLGKAMRLRIVPELTFFYDNSLVEGMRMSNLVTNVVKHDEERRVNPDDSKED</sequence>
<comment type="function">
    <text evidence="1">One of several proteins that assist in the late maturation steps of the functional core of the 30S ribosomal subunit. Associates with free 30S ribosomal subunits (but not with 30S subunits that are part of 70S ribosomes or polysomes). Required for efficient processing of 16S rRNA. May interact with the 5'-terminal helix region of 16S rRNA.</text>
</comment>
<comment type="subunit">
    <text evidence="1">Monomer. Binds 30S ribosomal subunits, but not 50S ribosomal subunits or 70S ribosomes.</text>
</comment>
<comment type="subcellular location">
    <subcellularLocation>
        <location evidence="1">Cytoplasm</location>
    </subcellularLocation>
</comment>
<comment type="similarity">
    <text evidence="1">Belongs to the RbfA family.</text>
</comment>
<protein>
    <recommendedName>
        <fullName evidence="1">Ribosome-binding factor A</fullName>
    </recommendedName>
</protein>
<gene>
    <name evidence="1" type="primary">rbfA</name>
    <name type="ordered locus">SG3176</name>
</gene>
<accession>B5REN5</accession>
<reference key="1">
    <citation type="journal article" date="2008" name="Genome Res.">
        <title>Comparative genome analysis of Salmonella enteritidis PT4 and Salmonella gallinarum 287/91 provides insights into evolutionary and host adaptation pathways.</title>
        <authorList>
            <person name="Thomson N.R."/>
            <person name="Clayton D.J."/>
            <person name="Windhorst D."/>
            <person name="Vernikos G."/>
            <person name="Davidson S."/>
            <person name="Churcher C."/>
            <person name="Quail M.A."/>
            <person name="Stevens M."/>
            <person name="Jones M.A."/>
            <person name="Watson M."/>
            <person name="Barron A."/>
            <person name="Layton A."/>
            <person name="Pickard D."/>
            <person name="Kingsley R.A."/>
            <person name="Bignell A."/>
            <person name="Clark L."/>
            <person name="Harris B."/>
            <person name="Ormond D."/>
            <person name="Abdellah Z."/>
            <person name="Brooks K."/>
            <person name="Cherevach I."/>
            <person name="Chillingworth T."/>
            <person name="Woodward J."/>
            <person name="Norberczak H."/>
            <person name="Lord A."/>
            <person name="Arrowsmith C."/>
            <person name="Jagels K."/>
            <person name="Moule S."/>
            <person name="Mungall K."/>
            <person name="Saunders M."/>
            <person name="Whitehead S."/>
            <person name="Chabalgoity J.A."/>
            <person name="Maskell D."/>
            <person name="Humphreys T."/>
            <person name="Roberts M."/>
            <person name="Barrow P.A."/>
            <person name="Dougan G."/>
            <person name="Parkhill J."/>
        </authorList>
    </citation>
    <scope>NUCLEOTIDE SEQUENCE [LARGE SCALE GENOMIC DNA]</scope>
    <source>
        <strain>287/91 / NCTC 13346</strain>
    </source>
</reference>
<proteinExistence type="inferred from homology"/>